<reference key="1">
    <citation type="journal article" date="2003" name="Proc. Natl. Acad. Sci. U.S.A.">
        <title>Lateral gene transfer and the evolution of plastid-targeted proteins in the secondary plastid-containing alga Bigelowiella natans.</title>
        <authorList>
            <person name="Archibald J.M."/>
            <person name="Rogers M.B."/>
            <person name="Toop M."/>
            <person name="Ishida K."/>
            <person name="Keeling P.J."/>
        </authorList>
    </citation>
    <scope>NUCLEOTIDE SEQUENCE [MRNA]</scope>
</reference>
<comment type="function">
    <text evidence="1">One of the primary rRNA binding proteins, it binds directly near the 3'-end of the 23S rRNA, where it nucleates assembly of the 50S subunit.</text>
</comment>
<comment type="subunit">
    <text>Part of the 50S ribosomal subunit.</text>
</comment>
<comment type="subcellular location">
    <subcellularLocation>
        <location evidence="4">Plastid</location>
        <location evidence="4">Chloroplast</location>
    </subcellularLocation>
</comment>
<comment type="similarity">
    <text evidence="4">Belongs to the universal ribosomal protein uL3 family.</text>
</comment>
<accession>Q7XYP4</accession>
<name>RK3_BIGNA</name>
<keyword id="KW-0150">Chloroplast</keyword>
<keyword id="KW-0934">Plastid</keyword>
<keyword id="KW-0687">Ribonucleoprotein</keyword>
<keyword id="KW-0689">Ribosomal protein</keyword>
<keyword id="KW-0694">RNA-binding</keyword>
<keyword id="KW-0699">rRNA-binding</keyword>
<keyword id="KW-0809">Transit peptide</keyword>
<gene>
    <name type="primary">RPL3</name>
</gene>
<evidence type="ECO:0000250" key="1"/>
<evidence type="ECO:0000255" key="2"/>
<evidence type="ECO:0000256" key="3">
    <source>
        <dbReference type="SAM" id="MobiDB-lite"/>
    </source>
</evidence>
<evidence type="ECO:0000305" key="4"/>
<organism>
    <name type="scientific">Bigelowiella natans</name>
    <name type="common">Pedinomonas minutissima</name>
    <name type="synonym">Chlorarachnion sp. (strain CCMP621)</name>
    <dbReference type="NCBI Taxonomy" id="227086"/>
    <lineage>
        <taxon>Eukaryota</taxon>
        <taxon>Sar</taxon>
        <taxon>Rhizaria</taxon>
        <taxon>Cercozoa</taxon>
        <taxon>Chlorarachniophyceae</taxon>
        <taxon>Bigelowiella</taxon>
    </lineage>
</organism>
<protein>
    <recommendedName>
        <fullName evidence="4">Large ribosomal subunit protein uL3c</fullName>
    </recommendedName>
    <alternativeName>
        <fullName>50S ribosomal protein L3, chloroplastic</fullName>
    </alternativeName>
</protein>
<sequence length="302" mass="33126">MFQSSRLVALGLCAALVLVGGSIILSGLSPNLSSPMAAAARASSSALVALPGGRMIEVPHMTKDYRDVKVCSRQRKWEIREHMRDPIKMGLMGTKAGMTTYYDDEGIAHPVTVIALEAGNVVTQVKTKETDGYDAVQLAYKETRDRTIPWPERQHLRKHGNVKAMKHLKEFKIADVSEFTPGQQLKAEELFEVGDLVDVSGTSSGKGFQGSIRRWGMKRGPMSHGSKSHRQHGSIGCSATPSRVYKGLKMAGRMGNERKTVKKLPVMMVNDEEKYIVVRGSVPGKKGTIVELRPTKIVGKHC</sequence>
<proteinExistence type="evidence at transcript level"/>
<feature type="transit peptide" description="Chloroplast" evidence="2">
    <location>
        <begin position="1"/>
        <end position="36"/>
    </location>
</feature>
<feature type="chain" id="PRO_0000030534" description="Large ribosomal subunit protein uL3c">
    <location>
        <begin position="37"/>
        <end position="302"/>
    </location>
</feature>
<feature type="region of interest" description="Disordered" evidence="3">
    <location>
        <begin position="208"/>
        <end position="239"/>
    </location>
</feature>
<dbReference type="EMBL" id="AY267636">
    <property type="protein sequence ID" value="AAP79150.1"/>
    <property type="molecule type" value="mRNA"/>
</dbReference>
<dbReference type="SMR" id="Q7XYP4"/>
<dbReference type="HOGENOM" id="CLU_044142_4_1_1"/>
<dbReference type="GO" id="GO:0009507">
    <property type="term" value="C:chloroplast"/>
    <property type="evidence" value="ECO:0007669"/>
    <property type="project" value="UniProtKB-SubCell"/>
</dbReference>
<dbReference type="GO" id="GO:1990904">
    <property type="term" value="C:ribonucleoprotein complex"/>
    <property type="evidence" value="ECO:0007669"/>
    <property type="project" value="UniProtKB-KW"/>
</dbReference>
<dbReference type="GO" id="GO:0005840">
    <property type="term" value="C:ribosome"/>
    <property type="evidence" value="ECO:0007669"/>
    <property type="project" value="UniProtKB-KW"/>
</dbReference>
<dbReference type="GO" id="GO:0019843">
    <property type="term" value="F:rRNA binding"/>
    <property type="evidence" value="ECO:0007669"/>
    <property type="project" value="UniProtKB-KW"/>
</dbReference>
<dbReference type="GO" id="GO:0003735">
    <property type="term" value="F:structural constituent of ribosome"/>
    <property type="evidence" value="ECO:0007669"/>
    <property type="project" value="InterPro"/>
</dbReference>
<dbReference type="GO" id="GO:0006412">
    <property type="term" value="P:translation"/>
    <property type="evidence" value="ECO:0007669"/>
    <property type="project" value="InterPro"/>
</dbReference>
<dbReference type="FunFam" id="3.30.160.810:FF:000001">
    <property type="entry name" value="50S ribosomal protein L3"/>
    <property type="match status" value="1"/>
</dbReference>
<dbReference type="FunFam" id="2.40.30.10:FF:000065">
    <property type="entry name" value="50S ribosomal protein L3, chloroplastic"/>
    <property type="match status" value="1"/>
</dbReference>
<dbReference type="Gene3D" id="3.30.160.810">
    <property type="match status" value="1"/>
</dbReference>
<dbReference type="Gene3D" id="2.40.30.10">
    <property type="entry name" value="Translation factors"/>
    <property type="match status" value="1"/>
</dbReference>
<dbReference type="HAMAP" id="MF_01325_B">
    <property type="entry name" value="Ribosomal_uL3_B"/>
    <property type="match status" value="1"/>
</dbReference>
<dbReference type="InterPro" id="IPR000597">
    <property type="entry name" value="Ribosomal_uL3"/>
</dbReference>
<dbReference type="InterPro" id="IPR019927">
    <property type="entry name" value="Ribosomal_uL3_bac/org-type"/>
</dbReference>
<dbReference type="InterPro" id="IPR019926">
    <property type="entry name" value="Ribosomal_uL3_CS"/>
</dbReference>
<dbReference type="InterPro" id="IPR009000">
    <property type="entry name" value="Transl_B-barrel_sf"/>
</dbReference>
<dbReference type="NCBIfam" id="TIGR03625">
    <property type="entry name" value="L3_bact"/>
    <property type="match status" value="1"/>
</dbReference>
<dbReference type="PANTHER" id="PTHR11229">
    <property type="entry name" value="50S RIBOSOMAL PROTEIN L3"/>
    <property type="match status" value="1"/>
</dbReference>
<dbReference type="PANTHER" id="PTHR11229:SF16">
    <property type="entry name" value="LARGE RIBOSOMAL SUBUNIT PROTEIN UL3C"/>
    <property type="match status" value="1"/>
</dbReference>
<dbReference type="Pfam" id="PF00297">
    <property type="entry name" value="Ribosomal_L3"/>
    <property type="match status" value="1"/>
</dbReference>
<dbReference type="SUPFAM" id="SSF50447">
    <property type="entry name" value="Translation proteins"/>
    <property type="match status" value="1"/>
</dbReference>
<dbReference type="PROSITE" id="PS00474">
    <property type="entry name" value="RIBOSOMAL_L3"/>
    <property type="match status" value="1"/>
</dbReference>